<dbReference type="EC" id="2.1.1.189" evidence="1"/>
<dbReference type="EMBL" id="CP000931">
    <property type="protein sequence ID" value="ABZ78259.1"/>
    <property type="status" value="ALT_INIT"/>
    <property type="molecule type" value="Genomic_DNA"/>
</dbReference>
<dbReference type="RefSeq" id="WP_041416126.1">
    <property type="nucleotide sequence ID" value="NC_010334.1"/>
</dbReference>
<dbReference type="SMR" id="B0TUZ2"/>
<dbReference type="STRING" id="458817.Shal_3719"/>
<dbReference type="KEGG" id="shl:Shal_3719"/>
<dbReference type="eggNOG" id="COG2265">
    <property type="taxonomic scope" value="Bacteria"/>
</dbReference>
<dbReference type="HOGENOM" id="CLU_014689_0_0_6"/>
<dbReference type="OrthoDB" id="9804590at2"/>
<dbReference type="Proteomes" id="UP000001317">
    <property type="component" value="Chromosome"/>
</dbReference>
<dbReference type="GO" id="GO:0051539">
    <property type="term" value="F:4 iron, 4 sulfur cluster binding"/>
    <property type="evidence" value="ECO:0007669"/>
    <property type="project" value="UniProtKB-KW"/>
</dbReference>
<dbReference type="GO" id="GO:0005506">
    <property type="term" value="F:iron ion binding"/>
    <property type="evidence" value="ECO:0007669"/>
    <property type="project" value="UniProtKB-UniRule"/>
</dbReference>
<dbReference type="GO" id="GO:0070041">
    <property type="term" value="F:rRNA (uridine-C5-)-methyltransferase activity"/>
    <property type="evidence" value="ECO:0007669"/>
    <property type="project" value="UniProtKB-UniRule"/>
</dbReference>
<dbReference type="GO" id="GO:0070475">
    <property type="term" value="P:rRNA base methylation"/>
    <property type="evidence" value="ECO:0007669"/>
    <property type="project" value="TreeGrafter"/>
</dbReference>
<dbReference type="CDD" id="cd02440">
    <property type="entry name" value="AdoMet_MTases"/>
    <property type="match status" value="1"/>
</dbReference>
<dbReference type="Gene3D" id="2.40.50.1070">
    <property type="match status" value="1"/>
</dbReference>
<dbReference type="Gene3D" id="3.40.50.150">
    <property type="entry name" value="Vaccinia Virus protein VP39"/>
    <property type="match status" value="1"/>
</dbReference>
<dbReference type="HAMAP" id="MF_01012">
    <property type="entry name" value="23SrRNA_methyltr_RlmC"/>
    <property type="match status" value="1"/>
</dbReference>
<dbReference type="InterPro" id="IPR011825">
    <property type="entry name" value="23SrRNA_MeTrfase_RlmC"/>
</dbReference>
<dbReference type="InterPro" id="IPR030390">
    <property type="entry name" value="MeTrfase_TrmA_AS"/>
</dbReference>
<dbReference type="InterPro" id="IPR030391">
    <property type="entry name" value="MeTrfase_TrmA_CS"/>
</dbReference>
<dbReference type="InterPro" id="IPR029063">
    <property type="entry name" value="SAM-dependent_MTases_sf"/>
</dbReference>
<dbReference type="InterPro" id="IPR010280">
    <property type="entry name" value="U5_MeTrfase_fam"/>
</dbReference>
<dbReference type="NCBIfam" id="TIGR02085">
    <property type="entry name" value="meth_trns_rumB"/>
    <property type="match status" value="1"/>
</dbReference>
<dbReference type="NCBIfam" id="TIGR00479">
    <property type="entry name" value="rumA"/>
    <property type="match status" value="1"/>
</dbReference>
<dbReference type="PANTHER" id="PTHR11061">
    <property type="entry name" value="RNA M5U METHYLTRANSFERASE"/>
    <property type="match status" value="1"/>
</dbReference>
<dbReference type="PANTHER" id="PTHR11061:SF30">
    <property type="entry name" value="TRNA (URACIL(54)-C(5))-METHYLTRANSFERASE"/>
    <property type="match status" value="1"/>
</dbReference>
<dbReference type="Pfam" id="PF05958">
    <property type="entry name" value="tRNA_U5-meth_tr"/>
    <property type="match status" value="1"/>
</dbReference>
<dbReference type="SUPFAM" id="SSF53335">
    <property type="entry name" value="S-adenosyl-L-methionine-dependent methyltransferases"/>
    <property type="match status" value="1"/>
</dbReference>
<dbReference type="PROSITE" id="PS51687">
    <property type="entry name" value="SAM_MT_RNA_M5U"/>
    <property type="match status" value="1"/>
</dbReference>
<dbReference type="PROSITE" id="PS01230">
    <property type="entry name" value="TRMA_1"/>
    <property type="match status" value="1"/>
</dbReference>
<dbReference type="PROSITE" id="PS01231">
    <property type="entry name" value="TRMA_2"/>
    <property type="match status" value="1"/>
</dbReference>
<name>RLMC_SHEHH</name>
<evidence type="ECO:0000255" key="1">
    <source>
        <dbReference type="HAMAP-Rule" id="MF_01012"/>
    </source>
</evidence>
<evidence type="ECO:0000305" key="2"/>
<gene>
    <name evidence="1" type="primary">rlmC</name>
    <name type="ordered locus">Shal_3719</name>
</gene>
<proteinExistence type="inferred from homology"/>
<keyword id="KW-0004">4Fe-4S</keyword>
<keyword id="KW-0408">Iron</keyword>
<keyword id="KW-0411">Iron-sulfur</keyword>
<keyword id="KW-0479">Metal-binding</keyword>
<keyword id="KW-0489">Methyltransferase</keyword>
<keyword id="KW-0698">rRNA processing</keyword>
<keyword id="KW-0949">S-adenosyl-L-methionine</keyword>
<keyword id="KW-0808">Transferase</keyword>
<sequence length="378" mass="42276">MKCAHFVQQQCLSCRHINQPMPVQVAAKSQVLSQLLSGFEVEQWREPVFGPESGFRNKAKMVVLGAAHQPILGIVTPTGEPVSLCDCNLYPIDMQQLLHRLELFVRQAGIPPYNVDKVKGELKFILLTRSQIKGEYLLRFVLRSHKSIERIERELPQLLSEYPQIKVVSVNIQPVHMAILEGEEELFLTEETRLSEQFNDVPLFIRPKSFFQTHPEIAAKLYQTAREWVAELKPDTLWDLFCGVGGFGLHCASKQSALTGIEISAEAITCAKLSAEAMGLTQVNFTALDSTGFAQGCDAKDKPDVVIVNPPRRGIGESLCQSLSAFAPKAILYSSCNPHTLAKDLACIQGYRVQKVQLFDMFPHTDHFEVLVMLLKDA</sequence>
<comment type="function">
    <text evidence="1">Catalyzes the formation of 5-methyl-uridine at position 747 (m5U747) in 23S rRNA.</text>
</comment>
<comment type="catalytic activity">
    <reaction evidence="1">
        <text>uridine(747) in 23S rRNA + S-adenosyl-L-methionine = 5-methyluridine(747) in 23S rRNA + S-adenosyl-L-homocysteine + H(+)</text>
        <dbReference type="Rhea" id="RHEA:42628"/>
        <dbReference type="Rhea" id="RHEA-COMP:10154"/>
        <dbReference type="Rhea" id="RHEA-COMP:10155"/>
        <dbReference type="ChEBI" id="CHEBI:15378"/>
        <dbReference type="ChEBI" id="CHEBI:57856"/>
        <dbReference type="ChEBI" id="CHEBI:59789"/>
        <dbReference type="ChEBI" id="CHEBI:65315"/>
        <dbReference type="ChEBI" id="CHEBI:74447"/>
        <dbReference type="EC" id="2.1.1.189"/>
    </reaction>
</comment>
<comment type="similarity">
    <text evidence="1">Belongs to the class I-like SAM-binding methyltransferase superfamily. RNA M5U methyltransferase family. RlmC subfamily.</text>
</comment>
<comment type="sequence caution" evidence="2">
    <conflict type="erroneous initiation">
        <sequence resource="EMBL-CDS" id="ABZ78259"/>
    </conflict>
    <text>Truncated N-terminus.</text>
</comment>
<organism>
    <name type="scientific">Shewanella halifaxensis (strain HAW-EB4)</name>
    <dbReference type="NCBI Taxonomy" id="458817"/>
    <lineage>
        <taxon>Bacteria</taxon>
        <taxon>Pseudomonadati</taxon>
        <taxon>Pseudomonadota</taxon>
        <taxon>Gammaproteobacteria</taxon>
        <taxon>Alteromonadales</taxon>
        <taxon>Shewanellaceae</taxon>
        <taxon>Shewanella</taxon>
    </lineage>
</organism>
<feature type="chain" id="PRO_0000414823" description="23S rRNA (uracil(747)-C(5))-methyltransferase RlmC">
    <location>
        <begin position="1"/>
        <end position="378"/>
    </location>
</feature>
<feature type="active site" description="Nucleophile" evidence="1">
    <location>
        <position position="336"/>
    </location>
</feature>
<feature type="binding site" evidence="1">
    <location>
        <position position="3"/>
    </location>
    <ligand>
        <name>[4Fe-4S] cluster</name>
        <dbReference type="ChEBI" id="CHEBI:49883"/>
    </ligand>
</feature>
<feature type="binding site" evidence="1">
    <location>
        <position position="11"/>
    </location>
    <ligand>
        <name>[4Fe-4S] cluster</name>
        <dbReference type="ChEBI" id="CHEBI:49883"/>
    </ligand>
</feature>
<feature type="binding site" evidence="1">
    <location>
        <position position="14"/>
    </location>
    <ligand>
        <name>[4Fe-4S] cluster</name>
        <dbReference type="ChEBI" id="CHEBI:49883"/>
    </ligand>
</feature>
<feature type="binding site" evidence="1">
    <location>
        <position position="87"/>
    </location>
    <ligand>
        <name>[4Fe-4S] cluster</name>
        <dbReference type="ChEBI" id="CHEBI:49883"/>
    </ligand>
</feature>
<feature type="binding site" evidence="1">
    <location>
        <position position="212"/>
    </location>
    <ligand>
        <name>S-adenosyl-L-methionine</name>
        <dbReference type="ChEBI" id="CHEBI:59789"/>
    </ligand>
</feature>
<feature type="binding site" evidence="1">
    <location>
        <position position="241"/>
    </location>
    <ligand>
        <name>S-adenosyl-L-methionine</name>
        <dbReference type="ChEBI" id="CHEBI:59789"/>
    </ligand>
</feature>
<feature type="binding site" evidence="1">
    <location>
        <position position="262"/>
    </location>
    <ligand>
        <name>S-adenosyl-L-methionine</name>
        <dbReference type="ChEBI" id="CHEBI:59789"/>
    </ligand>
</feature>
<feature type="binding site" evidence="1">
    <location>
        <position position="309"/>
    </location>
    <ligand>
        <name>S-adenosyl-L-methionine</name>
        <dbReference type="ChEBI" id="CHEBI:59789"/>
    </ligand>
</feature>
<accession>B0TUZ2</accession>
<protein>
    <recommendedName>
        <fullName evidence="1">23S rRNA (uracil(747)-C(5))-methyltransferase RlmC</fullName>
        <ecNumber evidence="1">2.1.1.189</ecNumber>
    </recommendedName>
    <alternativeName>
        <fullName evidence="1">23S rRNA(m5U747)-methyltransferase</fullName>
    </alternativeName>
</protein>
<reference key="1">
    <citation type="submission" date="2008-01" db="EMBL/GenBank/DDBJ databases">
        <title>Complete sequence of Shewanella halifaxensis HAW-EB4.</title>
        <authorList>
            <consortium name="US DOE Joint Genome Institute"/>
            <person name="Copeland A."/>
            <person name="Lucas S."/>
            <person name="Lapidus A."/>
            <person name="Glavina del Rio T."/>
            <person name="Dalin E."/>
            <person name="Tice H."/>
            <person name="Bruce D."/>
            <person name="Goodwin L."/>
            <person name="Pitluck S."/>
            <person name="Sims D."/>
            <person name="Brettin T."/>
            <person name="Detter J.C."/>
            <person name="Han C."/>
            <person name="Kuske C.R."/>
            <person name="Schmutz J."/>
            <person name="Larimer F."/>
            <person name="Land M."/>
            <person name="Hauser L."/>
            <person name="Kyrpides N."/>
            <person name="Kim E."/>
            <person name="Zhao J.-S."/>
            <person name="Richardson P."/>
        </authorList>
    </citation>
    <scope>NUCLEOTIDE SEQUENCE [LARGE SCALE GENOMIC DNA]</scope>
    <source>
        <strain>HAW-EB4</strain>
    </source>
</reference>